<proteinExistence type="evidence at protein level"/>
<reference key="1">
    <citation type="journal article" date="1998" name="Science">
        <title>Genome sequence of the nematode C. elegans: a platform for investigating biology.</title>
        <authorList>
            <consortium name="The C. elegans sequencing consortium"/>
        </authorList>
    </citation>
    <scope>NUCLEOTIDE SEQUENCE [LARGE SCALE GENOMIC DNA]</scope>
    <scope>ALTERNATIVE SPLICING</scope>
    <source>
        <strain>Bristol N2</strain>
    </source>
</reference>
<reference key="2">
    <citation type="journal article" date="2000" name="Development">
        <title>Papilin in development; a pericellular protein with a homology to the ADAMTS metalloproteinases.</title>
        <authorList>
            <person name="Kramerova I.A."/>
            <person name="Kawaguchi N."/>
            <person name="Fessler L.I."/>
            <person name="Nelson R.E."/>
            <person name="Chen Y."/>
            <person name="Kramerov A.A."/>
            <person name="Kusche-Gullberg M."/>
            <person name="Kramer J.M."/>
            <person name="Ackley B.D."/>
            <person name="Sieron A.L."/>
            <person name="Prockop D.J."/>
            <person name="Fessler J.H."/>
        </authorList>
    </citation>
    <scope>FUNCTION</scope>
</reference>
<reference key="3">
    <citation type="journal article" date="2003" name="Nat. Biotechnol.">
        <title>Lectin affinity capture, isotope-coded tagging and mass spectrometry to identify N-linked glycoproteins.</title>
        <authorList>
            <person name="Kaji H."/>
            <person name="Saito H."/>
            <person name="Yamauchi Y."/>
            <person name="Shinkawa T."/>
            <person name="Taoka M."/>
            <person name="Hirabayashi J."/>
            <person name="Kasai K."/>
            <person name="Takahashi N."/>
            <person name="Isobe T."/>
        </authorList>
    </citation>
    <scope>GLYCOSYLATION [LARGE SCALE ANALYSIS] AT ASN-386; ASN-445; ASN-541; ASN-568; ASN-638; ASN-857; ASN-933 AND ASN-1090</scope>
    <scope>IDENTIFICATION BY MASS SPECTROMETRY</scope>
    <source>
        <strain>Bristol N2</strain>
    </source>
</reference>
<reference key="4">
    <citation type="journal article" date="2005" name="Glycobiology">
        <title>Identification of the hydrophobic glycoproteins of Caenorhabditis elegans.</title>
        <authorList>
            <person name="Fan X."/>
            <person name="She Y.-M."/>
            <person name="Bagshaw R.D."/>
            <person name="Callahan J.W."/>
            <person name="Schachter H."/>
            <person name="Mahuran D.J."/>
        </authorList>
    </citation>
    <scope>GLYCOSYLATION [LARGE SCALE ANALYSIS] AT ASN-445; ASN-857 AND ASN-1090</scope>
    <scope>IDENTIFICATION BY MASS SPECTROMETRY</scope>
</reference>
<reference key="5">
    <citation type="journal article" date="2007" name="Mol. Cell. Proteomics">
        <title>Proteomics reveals N-linked glycoprotein diversity in Caenorhabditis elegans and suggests an atypical translocation mechanism for integral membrane proteins.</title>
        <authorList>
            <person name="Kaji H."/>
            <person name="Kamiie J."/>
            <person name="Kawakami H."/>
            <person name="Kido K."/>
            <person name="Yamauchi Y."/>
            <person name="Shinkawa T."/>
            <person name="Taoka M."/>
            <person name="Takahashi N."/>
            <person name="Isobe T."/>
        </authorList>
    </citation>
    <scope>GLYCOSYLATION [LARGE SCALE ANALYSIS] AT ASN-268; ASN-386; ASN-445; ASN-541; ASN-568; ASN-638; ASN-857; ASN-933; ASN-1090 AND ASN-1992</scope>
    <scope>IDENTIFICATION BY MASS SPECTROMETRY</scope>
    <source>
        <strain>Bristol N2</strain>
    </source>
</reference>
<reference key="6">
    <citation type="journal article" date="2009" name="Development">
        <title>C. elegans mig-6 encodes papilin isoforms that affect distinct aspects of DTC migration, and interacts genetically with mig-17 and collagen IV.</title>
        <authorList>
            <person name="Kawano T."/>
            <person name="Zheng H."/>
            <person name="Merz D.C."/>
            <person name="Kohara Y."/>
            <person name="Tamai K.K."/>
            <person name="Nishiwaki K."/>
            <person name="Culotti J.G."/>
        </authorList>
    </citation>
    <scope>FUNCTION</scope>
    <scope>SUBCELLULAR LOCATION</scope>
    <scope>TISSUE SPECIFICITY</scope>
    <scope>DEVELOPMENTAL STAGE</scope>
    <scope>ALTERNATIVE SPLICING</scope>
</reference>
<reference key="7">
    <citation type="journal article" date="2010" name="Genetics">
        <title>Genetics of extracellular matrix remodeling during organ growth using the Caenorhabditis elegans pharynx model.</title>
        <authorList>
            <person name="Jafari G."/>
            <person name="Burghoorn J."/>
            <person name="Kawano T."/>
            <person name="Mathew M."/>
            <person name="Moerck C."/>
            <person name="Axaeng C."/>
            <person name="Ailion M."/>
            <person name="Thomas J.H."/>
            <person name="Culotti J.G."/>
            <person name="Swoboda P."/>
            <person name="Pilon M."/>
        </authorList>
    </citation>
    <scope>FUNCTION</scope>
    <scope>TISSUE SPECIFICITY</scope>
    <scope>DEVELOPMENTAL STAGE</scope>
    <scope>MUTAGENESIS OF TYR-650; CYS-848; 878-GLY-CYS-879; GLY-965 AND CYS-973</scope>
</reference>
<sequence>MRLLLFSAALLLCSVPTWAFSLSSFFGSDVAQKPYLHPNSPPERDPASSRMKRQAYQVYVDGDVSVTVDKSGQKETGNWGPWVPENECSRSCGGGVQLEKRQCSGDCTGASVRYISCNLNACESGTDFRAEQCSKFNDEALDGNYHKWTPYKGKNKCELVCKPESGNFYYKWADKVVDGTKCDSKSNDICVDGECLPVGCDGKLGSSLKFDKCGKCDGDGSTCKTIEGRFDERNLSPGYHDIIKLPEGATNIKIQEARKSTNNLALKNGSDHFYLNGNGLIQVEKEVEVGGTIFVYDDAEPETLSAQGPLSEELTVALLFRKGSRDTAIKYEFSIPLEEEVDYMYKFDNWTPCSVSCGKGVQTRNLYCIDGKNKGRVEDDLCEENNATKPEFEKSCETVDCEAEWFTGDWESCSSTCGDQGQQYRVVYCHQVFANGRRVTVEDGNCTVERPPVKQTCNRFACPEWQAGPWSACSEKCGDAFQYRSVTCRSEKEGEEGKLLAADACPADEQEKFDTERTCNLGPCEGLTFVTGEWNLCTRCNDTEETREVTCKDSQGRAYPLEKCLVDNSTEIPTDTRSCATQPPCEYEWTVSEWSKCTTECGHGHKTRRVICAIHQNGGLEVVDEGHCQAEKPEGKTNCTNEEKCTGTWYTSSWSECTAECGGGSQDRVAVCLNYDKKPVPEWCDEAVKPSEKQDCNVDDCPTCVDSEFGCCPDNSTFATGEFNFGCSNCSETEFGCCADNVTVATGPNSKGCEEFVESPLNLEADVANADAEASGDAPELCSVTNENGEAVDVECATIAPITALLGDGELIGNDTDASNETIHCSKTEFGCCPDWYTAASGKGNEGCPSFTLGGCNETQFGCCHDDVTLARGANLEGCGEPSCAASLYGCCKDRKTIAFGPHYSGCERSSFPCELSDFGCCPDGETAALGKNGTGCGENCLTTKFGCCPDGKTTAKGSHNEGCGCEFAQYGCCPDGKSVAKGAGFYGCPESCAQSQFGCCPDGKTRARGENKEGCPCQYTRYGCCPDGETTALGPRNDGCDNCRYAKHGCCPDGETKALGPDGAGCPPTTTPPFLMGGTVAPHKIAACNQTQESGTVCGAGYKLAWHYDTTEGRCNQFWYGGCGGNDNNFASQDMCETICVEPPGKGRCYLPRVDGPLRCDQLQPRYYYDHSKKHCVAFWWRGCLGNANNFNSFEECSMFCKDVGPYDAPTTAAPPPPPQQNAQQYLPTPEVQQIEIQSAEQPQPQQPQQQQQQQQQQPQQPRQSMEDICRSRQDAGPCETYSDQWFYNAFSQECETFTYGGCGGNLNRFRSKDECEQRCFFVHGAQPSAARQEQAQPAAQPAQPAQPSNIVSPPQQSASPVVVPSNSKQRDACHLNVDQGRCKGAFDSWYYEVATGSCVTFKYTGCGGNANRFASKDQCESLCVKPASEAASAGIDGAAGINSVCDEAKDTGPCTNFVTKWYYNKADGTCNRFHYGGCQGTNNRFDNEQQCKAACQNHKDACQLPKVQGPCSGKHSYYYYNTASHQCETFTYGGCLGNTNRFATIEECQARCPKDDQTTTTSQPEELPSLPLVQEDPQPRPAFSLKQSFAHSRRRDAPFARSVSARHHTPDSEEERVDCYAVPDPGSCGDYRLVWHYSATSNSCRQFYYGGCAGNTNRFETRDKCETSCVAKIEERVESVSEASKSLEEVRLTDPRMDSHFGYHDPEVDQIEEEAEYVIVDTGALPELCMLPEQRGSCYDNILRWRFDSEKSQCVTFMYSGCNPNANHFTSQETCERACGKWRNVAVCELPAEHGDCQLAIPRWYHDPKTSQCQMMMWTGCGGNGNAFSSKADCESLCRVETLWSNNTDFCTLERSAGPCTDSISMWYFDSTHLDCKPFTYGGCRGNQNRFVSKEQCQQSCRPGDTKSEDICTLRPEPGPCRLGLEKYFYDPVIQSCHMFHYGGCEGNANRFDSELDCFRRCSSVKVEASESERVGQLTSASTPVIYIVNKTAIFVGNTFRIRCNSYGVLPITWYKNGGLLQFGSRITEENDDTLEIVDALTADAGVYTCIAGQDSTMSEGVEVVIKRLPGHRTTSRPMLTPSKNFSLGTPPTPSPSTVSTTPFRIYTPGSAPSDARVSRPTSNSCMDVGNASTCDLIVKNGLCGKKRYGTFCCHTCTRVHNFKF</sequence>
<protein>
    <recommendedName>
        <fullName>Papilin</fullName>
    </recommendedName>
    <alternativeName>
        <fullName>Abnormal cell migration protein 6</fullName>
    </alternativeName>
</protein>
<feature type="signal peptide" evidence="2">
    <location>
        <begin position="1"/>
        <end position="19"/>
    </location>
</feature>
<feature type="chain" id="PRO_0000248545" description="Papilin">
    <location>
        <begin position="20"/>
        <end position="2167"/>
    </location>
</feature>
<feature type="domain" description="TSP type-1 1" evidence="4">
    <location>
        <begin position="76"/>
        <end position="123"/>
    </location>
</feature>
<feature type="domain" description="TSP type-1 2" evidence="4">
    <location>
        <begin position="341"/>
        <end position="402"/>
    </location>
</feature>
<feature type="domain" description="TSP type-1 3" evidence="4">
    <location>
        <begin position="404"/>
        <end position="459"/>
    </location>
</feature>
<feature type="domain" description="TSP type-1 4" evidence="4">
    <location>
        <begin position="461"/>
        <end position="525"/>
    </location>
</feature>
<feature type="domain" description="TSP type-1 5" evidence="4">
    <location>
        <begin position="585"/>
        <end position="643"/>
    </location>
</feature>
<feature type="domain" description="TSP type-1 6" evidence="4">
    <location>
        <begin position="645"/>
        <end position="702"/>
    </location>
</feature>
<feature type="domain" description="BPTI/Kunitz inhibitor 1" evidence="3">
    <location>
        <begin position="1089"/>
        <end position="1141"/>
    </location>
</feature>
<feature type="domain" description="BPTI/Kunitz inhibitor 2" evidence="3">
    <location>
        <begin position="1150"/>
        <end position="1202"/>
    </location>
</feature>
<feature type="domain" description="BPTI/Kunitz inhibitor 3" evidence="3">
    <location>
        <begin position="1271"/>
        <end position="1321"/>
    </location>
</feature>
<feature type="domain" description="BPTI/Kunitz inhibitor 4" evidence="3">
    <location>
        <begin position="1375"/>
        <end position="1425"/>
    </location>
</feature>
<feature type="domain" description="BPTI/Kunitz inhibitor 5" evidence="3">
    <location>
        <begin position="1447"/>
        <end position="1497"/>
    </location>
</feature>
<feature type="domain" description="BPTI/Kunitz inhibitor 6" evidence="3">
    <location>
        <begin position="1504"/>
        <end position="1554"/>
    </location>
</feature>
<feature type="domain" description="BPTI/Kunitz inhibitor 7" evidence="3">
    <location>
        <begin position="1621"/>
        <end position="1671"/>
    </location>
</feature>
<feature type="domain" description="BPTI/Kunitz inhibitor 8" evidence="3">
    <location>
        <begin position="1731"/>
        <end position="1781"/>
    </location>
</feature>
<feature type="domain" description="BPTI/Kunitz inhibitor 9" evidence="3">
    <location>
        <begin position="1790"/>
        <end position="1840"/>
    </location>
</feature>
<feature type="domain" description="BPTI/Kunitz inhibitor 10" evidence="3">
    <location>
        <begin position="1853"/>
        <end position="1903"/>
    </location>
</feature>
<feature type="domain" description="BPTI/Kunitz inhibitor 11" evidence="3">
    <location>
        <begin position="1914"/>
        <end position="1964"/>
    </location>
</feature>
<feature type="domain" description="PLAC" evidence="5">
    <location>
        <begin position="2124"/>
        <end position="2163"/>
    </location>
</feature>
<feature type="region of interest" description="Disordered" evidence="6">
    <location>
        <begin position="1239"/>
        <end position="1273"/>
    </location>
</feature>
<feature type="region of interest" description="Disordered" evidence="6">
    <location>
        <begin position="1332"/>
        <end position="1365"/>
    </location>
</feature>
<feature type="region of interest" description="Disordered" evidence="6">
    <location>
        <begin position="1556"/>
        <end position="1615"/>
    </location>
</feature>
<feature type="region of interest" description="Disordered" evidence="6">
    <location>
        <begin position="2075"/>
        <end position="2106"/>
    </location>
</feature>
<feature type="compositionally biased region" description="Low complexity" evidence="6">
    <location>
        <begin position="1243"/>
        <end position="1263"/>
    </location>
</feature>
<feature type="compositionally biased region" description="Polar residues" evidence="6">
    <location>
        <begin position="2078"/>
        <end position="2090"/>
    </location>
</feature>
<feature type="glycosylation site" description="N-linked (GlcNAc...) asparagine" evidence="10">
    <location>
        <position position="268"/>
    </location>
</feature>
<feature type="glycosylation site" description="N-linked (GlcNAc...) asparagine" evidence="8 10">
    <location>
        <position position="386"/>
    </location>
</feature>
<feature type="glycosylation site" description="N-linked (GlcNAc...) asparagine" evidence="8 9 10">
    <location>
        <position position="445"/>
    </location>
</feature>
<feature type="glycosylation site" description="N-linked (GlcNAc...) asparagine" evidence="8 10">
    <location>
        <position position="541"/>
    </location>
</feature>
<feature type="glycosylation site" description="N-linked (GlcNAc...) asparagine" evidence="8 10">
    <location>
        <position position="568"/>
    </location>
</feature>
<feature type="glycosylation site" description="N-linked (GlcNAc...) asparagine" evidence="8 10">
    <location>
        <position position="638"/>
    </location>
</feature>
<feature type="glycosylation site" description="N-linked (GlcNAc...) asparagine" evidence="2">
    <location>
        <position position="715"/>
    </location>
</feature>
<feature type="glycosylation site" description="N-linked (GlcNAc...) asparagine" evidence="2">
    <location>
        <position position="729"/>
    </location>
</feature>
<feature type="glycosylation site" description="N-linked (GlcNAc...) asparagine" evidence="2">
    <location>
        <position position="741"/>
    </location>
</feature>
<feature type="glycosylation site" description="N-linked (GlcNAc...) asparagine" evidence="2">
    <location>
        <position position="814"/>
    </location>
</feature>
<feature type="glycosylation site" description="N-linked (GlcNAc...) asparagine" evidence="2">
    <location>
        <position position="820"/>
    </location>
</feature>
<feature type="glycosylation site" description="N-linked (GlcNAc...) asparagine" evidence="8 9 10">
    <location>
        <position position="857"/>
    </location>
</feature>
<feature type="glycosylation site" description="N-linked (GlcNAc...) asparagine" evidence="8 10">
    <location>
        <position position="933"/>
    </location>
</feature>
<feature type="glycosylation site" description="N-linked (GlcNAc...) asparagine" evidence="8 9 10">
    <location>
        <position position="1090"/>
    </location>
</feature>
<feature type="glycosylation site" description="N-linked (GlcNAc...) asparagine" evidence="2">
    <location>
        <position position="1848"/>
    </location>
</feature>
<feature type="glycosylation site" description="N-linked (GlcNAc...) asparagine" evidence="10">
    <location>
        <position position="1992"/>
    </location>
</feature>
<feature type="glycosylation site" description="N-linked (GlcNAc...) asparagine" evidence="2">
    <location>
        <position position="2087"/>
    </location>
</feature>
<feature type="glycosylation site" description="N-linked (GlcNAc...) asparagine" evidence="2">
    <location>
        <position position="2133"/>
    </location>
</feature>
<feature type="disulfide bond" evidence="1">
    <location>
        <begin position="88"/>
        <end position="117"/>
    </location>
</feature>
<feature type="disulfide bond" evidence="1">
    <location>
        <begin position="92"/>
        <end position="122"/>
    </location>
</feature>
<feature type="disulfide bond" evidence="1">
    <location>
        <begin position="103"/>
        <end position="107"/>
    </location>
</feature>
<feature type="disulfide bond" evidence="1">
    <location>
        <begin position="353"/>
        <end position="396"/>
    </location>
</feature>
<feature type="disulfide bond" evidence="1">
    <location>
        <begin position="357"/>
        <end position="401"/>
    </location>
</feature>
<feature type="disulfide bond" evidence="1">
    <location>
        <begin position="368"/>
        <end position="382"/>
    </location>
</feature>
<feature type="disulfide bond" evidence="1">
    <location>
        <begin position="1089"/>
        <end position="1141"/>
    </location>
</feature>
<feature type="disulfide bond" evidence="1">
    <location>
        <begin position="1099"/>
        <end position="1124"/>
    </location>
</feature>
<feature type="disulfide bond" evidence="1">
    <location>
        <begin position="1116"/>
        <end position="1137"/>
    </location>
</feature>
<feature type="disulfide bond" evidence="1">
    <location>
        <begin position="1150"/>
        <end position="1202"/>
    </location>
</feature>
<feature type="disulfide bond" evidence="1">
    <location>
        <begin position="1161"/>
        <end position="1185"/>
    </location>
</feature>
<feature type="disulfide bond" evidence="1">
    <location>
        <begin position="1177"/>
        <end position="1198"/>
    </location>
</feature>
<feature type="disulfide bond" evidence="1">
    <location>
        <begin position="1271"/>
        <end position="1321"/>
    </location>
</feature>
<feature type="disulfide bond" evidence="1">
    <location>
        <begin position="1280"/>
        <end position="1304"/>
    </location>
</feature>
<feature type="disulfide bond" evidence="1">
    <location>
        <begin position="1296"/>
        <end position="1317"/>
    </location>
</feature>
<feature type="disulfide bond" evidence="1">
    <location>
        <begin position="1375"/>
        <end position="1425"/>
    </location>
</feature>
<feature type="disulfide bond" evidence="1">
    <location>
        <begin position="1384"/>
        <end position="1408"/>
    </location>
</feature>
<feature type="disulfide bond" evidence="1">
    <location>
        <begin position="1400"/>
        <end position="1421"/>
    </location>
</feature>
<feature type="disulfide bond" evidence="1">
    <location>
        <begin position="1447"/>
        <end position="1497"/>
    </location>
</feature>
<feature type="disulfide bond" evidence="1">
    <location>
        <begin position="1456"/>
        <end position="1480"/>
    </location>
</feature>
<feature type="disulfide bond" evidence="1">
    <location>
        <begin position="1472"/>
        <end position="1493"/>
    </location>
</feature>
<feature type="disulfide bond" evidence="1">
    <location>
        <begin position="1504"/>
        <end position="1554"/>
    </location>
</feature>
<feature type="disulfide bond" evidence="1">
    <location>
        <begin position="1513"/>
        <end position="1537"/>
    </location>
</feature>
<feature type="disulfide bond" evidence="1">
    <location>
        <begin position="1529"/>
        <end position="1550"/>
    </location>
</feature>
<feature type="disulfide bond" evidence="1">
    <location>
        <begin position="1621"/>
        <end position="1671"/>
    </location>
</feature>
<feature type="disulfide bond" evidence="1">
    <location>
        <begin position="1630"/>
        <end position="1654"/>
    </location>
</feature>
<feature type="disulfide bond" evidence="1">
    <location>
        <begin position="1646"/>
        <end position="1667"/>
    </location>
</feature>
<feature type="disulfide bond" evidence="1">
    <location>
        <begin position="1731"/>
        <end position="1781"/>
    </location>
</feature>
<feature type="disulfide bond" evidence="1">
    <location>
        <begin position="1740"/>
        <end position="1764"/>
    </location>
</feature>
<feature type="disulfide bond" evidence="1">
    <location>
        <begin position="1756"/>
        <end position="1777"/>
    </location>
</feature>
<feature type="disulfide bond" evidence="1">
    <location>
        <begin position="1790"/>
        <end position="1840"/>
    </location>
</feature>
<feature type="disulfide bond" evidence="1">
    <location>
        <begin position="1799"/>
        <end position="1823"/>
    </location>
</feature>
<feature type="disulfide bond" evidence="1">
    <location>
        <begin position="1815"/>
        <end position="1836"/>
    </location>
</feature>
<feature type="disulfide bond" evidence="1">
    <location>
        <begin position="1853"/>
        <end position="1903"/>
    </location>
</feature>
<feature type="disulfide bond" evidence="1">
    <location>
        <begin position="1862"/>
        <end position="1886"/>
    </location>
</feature>
<feature type="disulfide bond" evidence="1">
    <location>
        <begin position="1878"/>
        <end position="1899"/>
    </location>
</feature>
<feature type="disulfide bond" evidence="1">
    <location>
        <begin position="1914"/>
        <end position="1964"/>
    </location>
</feature>
<feature type="disulfide bond" evidence="1">
    <location>
        <begin position="1923"/>
        <end position="1947"/>
    </location>
</feature>
<feature type="disulfide bond" evidence="1">
    <location>
        <begin position="1939"/>
        <end position="1960"/>
    </location>
</feature>
<feature type="splice variant" id="VSP_020307" description="In isoform c." evidence="13">
    <original>SNSKQRDACHLNVDQGRCKGAFDSWYYEVATGSCVTFKYTGCGGNANRFASKDQCESLCVKPASEAASAGID</original>
    <variation>Y</variation>
    <location>
        <begin position="1367"/>
        <end position="1438"/>
    </location>
</feature>
<feature type="splice variant" id="VSP_020308" description="In isoform a and isoform c." evidence="13">
    <original>KDD</original>
    <variation>SKF</variation>
    <location>
        <begin position="1556"/>
        <end position="1558"/>
    </location>
</feature>
<feature type="splice variant" id="VSP_020309" description="In isoform a and isoform c." evidence="13">
    <location>
        <begin position="1559"/>
        <end position="2167"/>
    </location>
</feature>
<feature type="mutagenesis site" description="In k177; no pharyngeal defects." evidence="12">
    <original>Y</original>
    <variation>D</variation>
    <location>
        <position position="650"/>
    </location>
</feature>
<feature type="mutagenesis site" description="In ev701; no pharyngeal defects." evidence="12">
    <original>C</original>
    <variation>Y</variation>
    <location>
        <position position="848"/>
    </location>
</feature>
<feature type="mutagenesis site" description="In ev700; no pharyngeal defects." evidence="12">
    <original>GC</original>
    <variation>EY</variation>
    <location>
        <begin position="878"/>
        <end position="879"/>
    </location>
</feature>
<feature type="mutagenesis site" description="In sa580; pharynx is twisted without affecting feeding or pumping rate. Causes some twisting in amphid neurons close to the pharynx." evidence="12">
    <original>G</original>
    <variation>E</variation>
    <location>
        <position position="965"/>
    </location>
</feature>
<feature type="mutagenesis site" description="In et4; pharynx is twisted without affecting feeding or pumping rate. Causes some twisting in amphid neurons close to the pharynx. NO defect in mig-17 localization." evidence="12">
    <original>C</original>
    <variation>Y</variation>
    <location>
        <position position="973"/>
    </location>
</feature>
<keyword id="KW-0025">Alternative splicing</keyword>
<keyword id="KW-0084">Basement membrane</keyword>
<keyword id="KW-0217">Developmental protein</keyword>
<keyword id="KW-1015">Disulfide bond</keyword>
<keyword id="KW-0272">Extracellular matrix</keyword>
<keyword id="KW-0325">Glycoprotein</keyword>
<keyword id="KW-0393">Immunoglobulin domain</keyword>
<keyword id="KW-0646">Protease inhibitor</keyword>
<keyword id="KW-0654">Proteoglycan</keyword>
<keyword id="KW-1185">Reference proteome</keyword>
<keyword id="KW-0677">Repeat</keyword>
<keyword id="KW-0964">Secreted</keyword>
<keyword id="KW-0722">Serine protease inhibitor</keyword>
<keyword id="KW-0732">Signal</keyword>
<gene>
    <name type="primary">mig-6</name>
    <name type="synonym">ppn-1</name>
    <name type="ORF">C37C3.6</name>
</gene>
<organism>
    <name type="scientific">Caenorhabditis elegans</name>
    <dbReference type="NCBI Taxonomy" id="6239"/>
    <lineage>
        <taxon>Eukaryota</taxon>
        <taxon>Metazoa</taxon>
        <taxon>Ecdysozoa</taxon>
        <taxon>Nematoda</taxon>
        <taxon>Chromadorea</taxon>
        <taxon>Rhabditida</taxon>
        <taxon>Rhabditina</taxon>
        <taxon>Rhabditomorpha</taxon>
        <taxon>Rhabditoidea</taxon>
        <taxon>Rhabditidae</taxon>
        <taxon>Peloderinae</taxon>
        <taxon>Caenorhabditis</taxon>
    </lineage>
</organism>
<comment type="function">
    <text evidence="12">Involved in pharynx morphogenesis probably by remodeling the basement membrane.</text>
</comment>
<comment type="function">
    <molecule>Isoform a</molecule>
    <text evidence="11">Plays a role in embryogenesis, the second phase of distal cell tip migration and is required for distribution of the metalloproteinase, mig-17, during organogenesis.</text>
</comment>
<comment type="function">
    <molecule>Isoform b</molecule>
    <text evidence="7 11">Plays a role in post embryonic distal cell tip migration (PubMed:19297413). Essential extracellular matrix (ECM) protein required for hypodermal enclosure in the embryo (PubMed:11076767).</text>
</comment>
<comment type="subcellular location">
    <subcellularLocation>
        <location evidence="11">Secreted</location>
        <location evidence="11">Extracellular space</location>
        <location evidence="11">Extracellular matrix</location>
        <location evidence="11">Basement membrane</location>
    </subcellularLocation>
</comment>
<comment type="alternative products">
    <event type="alternative splicing"/>
    <isoform>
        <id>O76840-1</id>
        <name>b</name>
        <name>mig-6L</name>
        <sequence type="displayed"/>
    </isoform>
    <isoform>
        <id>O76840-2</id>
        <name>a</name>
        <name>mig-6S</name>
        <sequence type="described" ref="VSP_020308 VSP_020309"/>
    </isoform>
    <isoform>
        <id>O76840-3</id>
        <name>c</name>
        <sequence type="described" ref="VSP_020307 VSP_020308 VSP_020309"/>
    </isoform>
</comment>
<comment type="tissue specificity">
    <text evidence="11 12">Localizes to the basement membranes of the gonad primordium, pharynx and intestine (at protein level) (PubMed:19297413). Expressed in head and CAN neurons, coelomocytes, body-wall muscles and anal depressor and sphincter and stomatointestinal muscles (PubMed:19297413, PubMed:20805556). Expressed Isoform a: is expressed in body wall muscles and distal cell tips (PubMed:19297413). Isoform b: expressed in embryonic muscles (PubMed:19297413).</text>
</comment>
<comment type="developmental stage">
    <text evidence="11 12">Expression is first detected is intestinal primordium at the embryonic stage 16 dpc followed by expression in future head neurons and head muscle cells at the comma and 1.5-fold stages (PubMed:20805556). Expressed in larvae and adults (PubMed:19297413, PubMed:20805556).</text>
</comment>
<comment type="similarity">
    <text evidence="13">Belongs to the papilin family.</text>
</comment>
<evidence type="ECO:0000250" key="1"/>
<evidence type="ECO:0000255" key="2"/>
<evidence type="ECO:0000255" key="3">
    <source>
        <dbReference type="PROSITE-ProRule" id="PRU00031"/>
    </source>
</evidence>
<evidence type="ECO:0000255" key="4">
    <source>
        <dbReference type="PROSITE-ProRule" id="PRU00210"/>
    </source>
</evidence>
<evidence type="ECO:0000255" key="5">
    <source>
        <dbReference type="PROSITE-ProRule" id="PRU00233"/>
    </source>
</evidence>
<evidence type="ECO:0000256" key="6">
    <source>
        <dbReference type="SAM" id="MobiDB-lite"/>
    </source>
</evidence>
<evidence type="ECO:0000269" key="7">
    <source>
    </source>
</evidence>
<evidence type="ECO:0000269" key="8">
    <source>
    </source>
</evidence>
<evidence type="ECO:0000269" key="9">
    <source>
    </source>
</evidence>
<evidence type="ECO:0000269" key="10">
    <source>
    </source>
</evidence>
<evidence type="ECO:0000269" key="11">
    <source>
    </source>
</evidence>
<evidence type="ECO:0000269" key="12">
    <source>
    </source>
</evidence>
<evidence type="ECO:0000305" key="13"/>
<dbReference type="EMBL" id="FO080808">
    <property type="protein sequence ID" value="CCD66947.1"/>
    <property type="molecule type" value="Genomic_DNA"/>
</dbReference>
<dbReference type="EMBL" id="FO080808">
    <property type="protein sequence ID" value="CCD66945.1"/>
    <property type="molecule type" value="Genomic_DNA"/>
</dbReference>
<dbReference type="EMBL" id="FO080808">
    <property type="protein sequence ID" value="CCD66946.1"/>
    <property type="molecule type" value="Genomic_DNA"/>
</dbReference>
<dbReference type="PIR" id="C89114">
    <property type="entry name" value="C89114"/>
</dbReference>
<dbReference type="PIR" id="T34395">
    <property type="entry name" value="T34395"/>
</dbReference>
<dbReference type="RefSeq" id="NP_001370555.1">
    <molecule id="O76840-2"/>
    <property type="nucleotide sequence ID" value="NM_001383344.2"/>
</dbReference>
<dbReference type="RefSeq" id="NP_505017.1">
    <molecule id="O76840-1"/>
    <property type="nucleotide sequence ID" value="NM_072616.7"/>
</dbReference>
<dbReference type="RefSeq" id="NP_505018.1">
    <property type="nucleotide sequence ID" value="NM_072617.4"/>
</dbReference>
<dbReference type="RefSeq" id="NP_741569.1">
    <molecule id="O76840-3"/>
    <property type="nucleotide sequence ID" value="NM_171931.7"/>
</dbReference>
<dbReference type="SMR" id="O76840"/>
<dbReference type="BioGRID" id="44205">
    <property type="interactions" value="38"/>
</dbReference>
<dbReference type="DIP" id="DIP-24457N"/>
<dbReference type="FunCoup" id="O76840">
    <property type="interactions" value="163"/>
</dbReference>
<dbReference type="IntAct" id="O76840">
    <property type="interactions" value="12"/>
</dbReference>
<dbReference type="STRING" id="6239.C37C3.6b.1"/>
<dbReference type="MEROPS" id="I02.968"/>
<dbReference type="MEROPS" id="I02.978"/>
<dbReference type="GlyCosmos" id="O76840">
    <property type="glycosylation" value="18 sites, No reported glycans"/>
</dbReference>
<dbReference type="iPTMnet" id="O76840"/>
<dbReference type="PaxDb" id="6239-C37C3.6b.2"/>
<dbReference type="PeptideAtlas" id="O76840"/>
<dbReference type="EnsemblMetazoa" id="C37C3.6a.1">
    <molecule id="O76840-2"/>
    <property type="protein sequence ID" value="C37C3.6a.1"/>
    <property type="gene ID" value="WBGene00003242"/>
</dbReference>
<dbReference type="EnsemblMetazoa" id="C37C3.6a.2">
    <molecule id="O76840-2"/>
    <property type="protein sequence ID" value="C37C3.6a.2"/>
    <property type="gene ID" value="WBGene00003242"/>
</dbReference>
<dbReference type="EnsemblMetazoa" id="C37C3.6b.1">
    <molecule id="O76840-1"/>
    <property type="protein sequence ID" value="C37C3.6b.1"/>
    <property type="gene ID" value="WBGene00003242"/>
</dbReference>
<dbReference type="EnsemblMetazoa" id="C37C3.6c.1">
    <molecule id="O76840-3"/>
    <property type="protein sequence ID" value="C37C3.6c.1"/>
    <property type="gene ID" value="WBGene00003242"/>
</dbReference>
<dbReference type="GeneID" id="179162"/>
<dbReference type="KEGG" id="cel:CELE_C37C3.6"/>
<dbReference type="UCSC" id="C37C3.6a.2">
    <molecule id="O76840-1"/>
    <property type="organism name" value="c. elegans"/>
</dbReference>
<dbReference type="AGR" id="WB:WBGene00003242"/>
<dbReference type="CTD" id="179162"/>
<dbReference type="WormBase" id="C37C3.6a">
    <molecule id="O76840-2"/>
    <property type="protein sequence ID" value="CE17535"/>
    <property type="gene ID" value="WBGene00003242"/>
    <property type="gene designation" value="mig-6"/>
</dbReference>
<dbReference type="WormBase" id="C37C3.6b">
    <molecule id="O76840-1"/>
    <property type="protein sequence ID" value="CE17536"/>
    <property type="gene ID" value="WBGene00003242"/>
    <property type="gene designation" value="mig-6"/>
</dbReference>
<dbReference type="WormBase" id="C37C3.6c">
    <molecule id="O76840-3"/>
    <property type="protein sequence ID" value="CE30735"/>
    <property type="gene ID" value="WBGene00003242"/>
    <property type="gene designation" value="mig-6"/>
</dbReference>
<dbReference type="eggNOG" id="KOG4597">
    <property type="taxonomic scope" value="Eukaryota"/>
</dbReference>
<dbReference type="GeneTree" id="ENSGT00940000171211"/>
<dbReference type="HOGENOM" id="CLU_000391_0_0_1"/>
<dbReference type="InParanoid" id="O76840"/>
<dbReference type="OMA" id="WFTGDWE"/>
<dbReference type="OrthoDB" id="5781878at2759"/>
<dbReference type="PhylomeDB" id="O76840"/>
<dbReference type="SignaLink" id="O76840"/>
<dbReference type="PRO" id="PR:O76840"/>
<dbReference type="Proteomes" id="UP000001940">
    <property type="component" value="Chromosome V"/>
</dbReference>
<dbReference type="Bgee" id="WBGene00003242">
    <property type="expression patterns" value="Expressed in larva and 11 other cell types or tissues"/>
</dbReference>
<dbReference type="GO" id="GO:0005604">
    <property type="term" value="C:basement membrane"/>
    <property type="evidence" value="ECO:0000314"/>
    <property type="project" value="WormBase"/>
</dbReference>
<dbReference type="GO" id="GO:0005576">
    <property type="term" value="C:extracellular region"/>
    <property type="evidence" value="ECO:0007669"/>
    <property type="project" value="UniProtKB-KW"/>
</dbReference>
<dbReference type="GO" id="GO:0004867">
    <property type="term" value="F:serine-type endopeptidase inhibitor activity"/>
    <property type="evidence" value="ECO:0007669"/>
    <property type="project" value="UniProtKB-KW"/>
</dbReference>
<dbReference type="GO" id="GO:0000902">
    <property type="term" value="P:cell morphogenesis"/>
    <property type="evidence" value="ECO:0000315"/>
    <property type="project" value="WormBase"/>
</dbReference>
<dbReference type="GO" id="GO:0097628">
    <property type="term" value="P:distal tip cell migration"/>
    <property type="evidence" value="ECO:0000315"/>
    <property type="project" value="WormBase"/>
</dbReference>
<dbReference type="GO" id="GO:0009792">
    <property type="term" value="P:embryo development ending in birth or egg hatching"/>
    <property type="evidence" value="ECO:0000315"/>
    <property type="project" value="WormBase"/>
</dbReference>
<dbReference type="GO" id="GO:0048598">
    <property type="term" value="P:embryonic morphogenesis"/>
    <property type="evidence" value="ECO:0000315"/>
    <property type="project" value="WormBase"/>
</dbReference>
<dbReference type="GO" id="GO:0030198">
    <property type="term" value="P:extracellular matrix organization"/>
    <property type="evidence" value="ECO:0007669"/>
    <property type="project" value="InterPro"/>
</dbReference>
<dbReference type="GO" id="GO:0002119">
    <property type="term" value="P:nematode larval development"/>
    <property type="evidence" value="ECO:0000315"/>
    <property type="project" value="WormBase"/>
</dbReference>
<dbReference type="CDD" id="cd00109">
    <property type="entry name" value="Kunitz-type"/>
    <property type="match status" value="7"/>
</dbReference>
<dbReference type="CDD" id="cd22638">
    <property type="entry name" value="Kunitz_amblin-like"/>
    <property type="match status" value="1"/>
</dbReference>
<dbReference type="CDD" id="cd22637">
    <property type="entry name" value="Kunitz_papilin_mig6-like"/>
    <property type="match status" value="1"/>
</dbReference>
<dbReference type="FunFam" id="2.60.120.830:FF:000001">
    <property type="entry name" value="A disintegrin and metalloproteinase with thrombospondin motifs 1"/>
    <property type="match status" value="1"/>
</dbReference>
<dbReference type="FunFam" id="2.20.100.10:FF:000005">
    <property type="entry name" value="ADAM metallopeptidase with thrombospondin type 1 motif 9"/>
    <property type="match status" value="2"/>
</dbReference>
<dbReference type="FunFam" id="4.10.410.10:FF:000020">
    <property type="entry name" value="Collagen, type VI, alpha 3"/>
    <property type="match status" value="4"/>
</dbReference>
<dbReference type="FunFam" id="4.10.410.10:FF:000065">
    <property type="entry name" value="Hedgehog interacting protein-like protein"/>
    <property type="match status" value="1"/>
</dbReference>
<dbReference type="FunFam" id="4.10.410.10:FF:000005">
    <property type="entry name" value="Pancreatic trypsin inhibitor"/>
    <property type="match status" value="1"/>
</dbReference>
<dbReference type="FunFam" id="4.10.410.10:FF:000017">
    <property type="entry name" value="papilin isoform X2"/>
    <property type="match status" value="2"/>
</dbReference>
<dbReference type="Gene3D" id="2.60.120.830">
    <property type="match status" value="1"/>
</dbReference>
<dbReference type="Gene3D" id="2.60.40.10">
    <property type="entry name" value="Immunoglobulins"/>
    <property type="match status" value="1"/>
</dbReference>
<dbReference type="Gene3D" id="4.10.410.10">
    <property type="entry name" value="Pancreatic trypsin inhibitor Kunitz domain"/>
    <property type="match status" value="11"/>
</dbReference>
<dbReference type="Gene3D" id="2.20.100.10">
    <property type="entry name" value="Thrombospondin type-1 (TSP1) repeat"/>
    <property type="match status" value="5"/>
</dbReference>
<dbReference type="InterPro" id="IPR013273">
    <property type="entry name" value="ADAMTS/ADAMTS-like"/>
</dbReference>
<dbReference type="InterPro" id="IPR010294">
    <property type="entry name" value="ADAMTS_spacer1"/>
</dbReference>
<dbReference type="InterPro" id="IPR007110">
    <property type="entry name" value="Ig-like_dom"/>
</dbReference>
<dbReference type="InterPro" id="IPR036179">
    <property type="entry name" value="Ig-like_dom_sf"/>
</dbReference>
<dbReference type="InterPro" id="IPR013783">
    <property type="entry name" value="Ig-like_fold"/>
</dbReference>
<dbReference type="InterPro" id="IPR013098">
    <property type="entry name" value="Ig_I-set"/>
</dbReference>
<dbReference type="InterPro" id="IPR003599">
    <property type="entry name" value="Ig_sub"/>
</dbReference>
<dbReference type="InterPro" id="IPR003598">
    <property type="entry name" value="Ig_sub2"/>
</dbReference>
<dbReference type="InterPro" id="IPR002223">
    <property type="entry name" value="Kunitz_BPTI"/>
</dbReference>
<dbReference type="InterPro" id="IPR036880">
    <property type="entry name" value="Kunitz_BPTI_sf"/>
</dbReference>
<dbReference type="InterPro" id="IPR010909">
    <property type="entry name" value="PLAC"/>
</dbReference>
<dbReference type="InterPro" id="IPR020901">
    <property type="entry name" value="Prtase_inh_Kunz-CS"/>
</dbReference>
<dbReference type="InterPro" id="IPR050098">
    <property type="entry name" value="TFPI/VKTCI-like"/>
</dbReference>
<dbReference type="InterPro" id="IPR000884">
    <property type="entry name" value="TSP1_rpt"/>
</dbReference>
<dbReference type="InterPro" id="IPR036383">
    <property type="entry name" value="TSP1_rpt_sf"/>
</dbReference>
<dbReference type="PANTHER" id="PTHR10083">
    <property type="entry name" value="KUNITZ-TYPE PROTEASE INHIBITOR-RELATED"/>
    <property type="match status" value="1"/>
</dbReference>
<dbReference type="PANTHER" id="PTHR10083:SF328">
    <property type="entry name" value="TISSUE FACTOR PATHWAY INHIBITOR"/>
    <property type="match status" value="1"/>
</dbReference>
<dbReference type="Pfam" id="PF05986">
    <property type="entry name" value="ADAMTS_spacer1"/>
    <property type="match status" value="1"/>
</dbReference>
<dbReference type="Pfam" id="PF07679">
    <property type="entry name" value="I-set"/>
    <property type="match status" value="1"/>
</dbReference>
<dbReference type="Pfam" id="PF00014">
    <property type="entry name" value="Kunitz_BPTI"/>
    <property type="match status" value="11"/>
</dbReference>
<dbReference type="Pfam" id="PF08686">
    <property type="entry name" value="PLAC"/>
    <property type="match status" value="1"/>
</dbReference>
<dbReference type="Pfam" id="PF19030">
    <property type="entry name" value="TSP1_ADAMTS"/>
    <property type="match status" value="5"/>
</dbReference>
<dbReference type="Pfam" id="PF00090">
    <property type="entry name" value="TSP_1"/>
    <property type="match status" value="1"/>
</dbReference>
<dbReference type="PRINTS" id="PR01857">
    <property type="entry name" value="ADAMTSFAMILY"/>
</dbReference>
<dbReference type="PRINTS" id="PR00759">
    <property type="entry name" value="BASICPTASE"/>
</dbReference>
<dbReference type="SMART" id="SM00409">
    <property type="entry name" value="IG"/>
    <property type="match status" value="1"/>
</dbReference>
<dbReference type="SMART" id="SM00408">
    <property type="entry name" value="IGc2"/>
    <property type="match status" value="1"/>
</dbReference>
<dbReference type="SMART" id="SM00131">
    <property type="entry name" value="KU"/>
    <property type="match status" value="11"/>
</dbReference>
<dbReference type="SMART" id="SM00209">
    <property type="entry name" value="TSP1"/>
    <property type="match status" value="7"/>
</dbReference>
<dbReference type="SUPFAM" id="SSF57362">
    <property type="entry name" value="BPTI-like"/>
    <property type="match status" value="11"/>
</dbReference>
<dbReference type="SUPFAM" id="SSF48726">
    <property type="entry name" value="Immunoglobulin"/>
    <property type="match status" value="1"/>
</dbReference>
<dbReference type="SUPFAM" id="SSF82895">
    <property type="entry name" value="TSP-1 type 1 repeat"/>
    <property type="match status" value="6"/>
</dbReference>
<dbReference type="PROSITE" id="PS00280">
    <property type="entry name" value="BPTI_KUNITZ_1"/>
    <property type="match status" value="10"/>
</dbReference>
<dbReference type="PROSITE" id="PS50279">
    <property type="entry name" value="BPTI_KUNITZ_2"/>
    <property type="match status" value="11"/>
</dbReference>
<dbReference type="PROSITE" id="PS50835">
    <property type="entry name" value="IG_LIKE"/>
    <property type="match status" value="1"/>
</dbReference>
<dbReference type="PROSITE" id="PS50900">
    <property type="entry name" value="PLAC"/>
    <property type="match status" value="1"/>
</dbReference>
<dbReference type="PROSITE" id="PS50092">
    <property type="entry name" value="TSP1"/>
    <property type="match status" value="5"/>
</dbReference>
<name>PPN1_CAEEL</name>
<accession>O76840</accession>
<accession>Q22911</accession>
<accession>Q8I7I0</accession>
<accession>Q8MPV5</accession>